<feature type="chain" id="PRO_0000360624" description="FMN-dependent NADPH-azoreductase">
    <location>
        <begin position="1"/>
        <end position="174"/>
    </location>
</feature>
<feature type="binding site" evidence="4 5">
    <location>
        <begin position="9"/>
        <end position="11"/>
    </location>
    <ligand>
        <name>FMN</name>
        <dbReference type="ChEBI" id="CHEBI:58210"/>
    </ligand>
</feature>
<feature type="binding site" evidence="4 5">
    <location>
        <begin position="15"/>
        <end position="16"/>
    </location>
    <ligand>
        <name>FMN</name>
        <dbReference type="ChEBI" id="CHEBI:58210"/>
    </ligand>
</feature>
<feature type="binding site" evidence="4 5">
    <location>
        <begin position="73"/>
        <end position="76"/>
    </location>
    <ligand>
        <name>FMN</name>
        <dbReference type="ChEBI" id="CHEBI:58210"/>
    </ligand>
</feature>
<feature type="binding site" evidence="4 5">
    <location>
        <position position="106"/>
    </location>
    <ligand>
        <name>FMN</name>
        <dbReference type="ChEBI" id="CHEBI:58210"/>
    </ligand>
</feature>
<feature type="strand" evidence="8">
    <location>
        <begin position="4"/>
        <end position="7"/>
    </location>
</feature>
<feature type="helix" evidence="8">
    <location>
        <begin position="15"/>
        <end position="26"/>
    </location>
</feature>
<feature type="strand" evidence="8">
    <location>
        <begin position="30"/>
        <end position="33"/>
    </location>
</feature>
<feature type="turn" evidence="8">
    <location>
        <begin position="34"/>
        <end position="36"/>
    </location>
</feature>
<feature type="helix" evidence="8">
    <location>
        <begin position="46"/>
        <end position="49"/>
    </location>
</feature>
<feature type="helix" evidence="8">
    <location>
        <begin position="52"/>
        <end position="63"/>
    </location>
</feature>
<feature type="strand" evidence="8">
    <location>
        <begin position="65"/>
        <end position="72"/>
    </location>
</feature>
<feature type="strand" evidence="8">
    <location>
        <begin position="74"/>
        <end position="77"/>
    </location>
</feature>
<feature type="helix" evidence="8">
    <location>
        <begin position="80"/>
        <end position="87"/>
    </location>
</feature>
<feature type="helix" evidence="8">
    <location>
        <begin position="91"/>
        <end position="94"/>
    </location>
</feature>
<feature type="strand" evidence="8">
    <location>
        <begin position="98"/>
        <end position="104"/>
    </location>
</feature>
<feature type="turn" evidence="7">
    <location>
        <begin position="108"/>
        <end position="111"/>
    </location>
</feature>
<feature type="helix" evidence="8">
    <location>
        <begin position="112"/>
        <end position="124"/>
    </location>
</feature>
<feature type="strand" evidence="8">
    <location>
        <begin position="128"/>
        <end position="136"/>
    </location>
</feature>
<feature type="helix" evidence="8">
    <location>
        <begin position="138"/>
        <end position="140"/>
    </location>
</feature>
<feature type="turn" evidence="8">
    <location>
        <begin position="143"/>
        <end position="146"/>
    </location>
</feature>
<feature type="helix" evidence="8">
    <location>
        <begin position="150"/>
        <end position="152"/>
    </location>
</feature>
<feature type="helix" evidence="8">
    <location>
        <begin position="153"/>
        <end position="168"/>
    </location>
</feature>
<evidence type="ECO:0000269" key="1">
    <source>
    </source>
</evidence>
<evidence type="ECO:0000269" key="2">
    <source>
    </source>
</evidence>
<evidence type="ECO:0000269" key="3">
    <source>
    </source>
</evidence>
<evidence type="ECO:0000269" key="4">
    <source ref="6"/>
</evidence>
<evidence type="ECO:0000269" key="5">
    <source ref="7"/>
</evidence>
<evidence type="ECO:0000305" key="6"/>
<evidence type="ECO:0007829" key="7">
    <source>
        <dbReference type="PDB" id="3GFR"/>
    </source>
</evidence>
<evidence type="ECO:0007829" key="8">
    <source>
        <dbReference type="PDB" id="3GFS"/>
    </source>
</evidence>
<organism>
    <name type="scientific">Bacillus subtilis (strain 168)</name>
    <dbReference type="NCBI Taxonomy" id="224308"/>
    <lineage>
        <taxon>Bacteria</taxon>
        <taxon>Bacillati</taxon>
        <taxon>Bacillota</taxon>
        <taxon>Bacilli</taxon>
        <taxon>Bacillales</taxon>
        <taxon>Bacillaceae</taxon>
        <taxon>Bacillus</taxon>
    </lineage>
</organism>
<gene>
    <name type="primary">azr</name>
    <name type="synonym">yhdA</name>
    <name type="ordered locus">BSU09340</name>
</gene>
<protein>
    <recommendedName>
        <fullName>FMN-dependent NADPH-azoreductase</fullName>
        <ecNumber>1.7.-.-</ecNumber>
    </recommendedName>
    <alternativeName>
        <fullName>Azobenzene reductase</fullName>
    </alternativeName>
</protein>
<accession>O07529</accession>
<accession>Q796Y0</accession>
<name>AZR_BACSU</name>
<reference key="1">
    <citation type="journal article" date="2006" name="Biosci. Biotechnol. Biochem.">
        <title>Expression and characterization of the genes encoding azoreductases from Bacillus subtilis and Geobacillus stearothermophilus.</title>
        <authorList>
            <person name="Sugiura W."/>
            <person name="Yoda T."/>
            <person name="Matsuba T."/>
            <person name="Tanaka Y."/>
            <person name="Suzuki Y."/>
        </authorList>
    </citation>
    <scope>NUCLEOTIDE SEQUENCE [MRNA]</scope>
    <scope>COFACTOR</scope>
    <scope>FUNCTION</scope>
    <source>
        <strain>ISW1214</strain>
    </source>
</reference>
<reference key="2">
    <citation type="journal article" date="1998" name="Microbiology">
        <title>The 172 kb prkA-addAB region from 83 degrees to 97 degrees of the Bacillus subtilis chromosome contains several dysfunctional genes, the glyB marker, many genes encoding transporter proteins, and the ubiquitous hit gene.</title>
        <authorList>
            <person name="Noback M.A."/>
            <person name="Holsappel S."/>
            <person name="Kiewiet R."/>
            <person name="Terpstra P."/>
            <person name="Wambutt R."/>
            <person name="Wedler H."/>
            <person name="Venema G."/>
            <person name="Bron S."/>
        </authorList>
    </citation>
    <scope>NUCLEOTIDE SEQUENCE [GENOMIC DNA]</scope>
    <source>
        <strain>168</strain>
    </source>
</reference>
<reference key="3">
    <citation type="journal article" date="1997" name="Nature">
        <title>The complete genome sequence of the Gram-positive bacterium Bacillus subtilis.</title>
        <authorList>
            <person name="Kunst F."/>
            <person name="Ogasawara N."/>
            <person name="Moszer I."/>
            <person name="Albertini A.M."/>
            <person name="Alloni G."/>
            <person name="Azevedo V."/>
            <person name="Bertero M.G."/>
            <person name="Bessieres P."/>
            <person name="Bolotin A."/>
            <person name="Borchert S."/>
            <person name="Borriss R."/>
            <person name="Boursier L."/>
            <person name="Brans A."/>
            <person name="Braun M."/>
            <person name="Brignell S.C."/>
            <person name="Bron S."/>
            <person name="Brouillet S."/>
            <person name="Bruschi C.V."/>
            <person name="Caldwell B."/>
            <person name="Capuano V."/>
            <person name="Carter N.M."/>
            <person name="Choi S.-K."/>
            <person name="Codani J.-J."/>
            <person name="Connerton I.F."/>
            <person name="Cummings N.J."/>
            <person name="Daniel R.A."/>
            <person name="Denizot F."/>
            <person name="Devine K.M."/>
            <person name="Duesterhoeft A."/>
            <person name="Ehrlich S.D."/>
            <person name="Emmerson P.T."/>
            <person name="Entian K.-D."/>
            <person name="Errington J."/>
            <person name="Fabret C."/>
            <person name="Ferrari E."/>
            <person name="Foulger D."/>
            <person name="Fritz C."/>
            <person name="Fujita M."/>
            <person name="Fujita Y."/>
            <person name="Fuma S."/>
            <person name="Galizzi A."/>
            <person name="Galleron N."/>
            <person name="Ghim S.-Y."/>
            <person name="Glaser P."/>
            <person name="Goffeau A."/>
            <person name="Golightly E.J."/>
            <person name="Grandi G."/>
            <person name="Guiseppi G."/>
            <person name="Guy B.J."/>
            <person name="Haga K."/>
            <person name="Haiech J."/>
            <person name="Harwood C.R."/>
            <person name="Henaut A."/>
            <person name="Hilbert H."/>
            <person name="Holsappel S."/>
            <person name="Hosono S."/>
            <person name="Hullo M.-F."/>
            <person name="Itaya M."/>
            <person name="Jones L.-M."/>
            <person name="Joris B."/>
            <person name="Karamata D."/>
            <person name="Kasahara Y."/>
            <person name="Klaerr-Blanchard M."/>
            <person name="Klein C."/>
            <person name="Kobayashi Y."/>
            <person name="Koetter P."/>
            <person name="Koningstein G."/>
            <person name="Krogh S."/>
            <person name="Kumano M."/>
            <person name="Kurita K."/>
            <person name="Lapidus A."/>
            <person name="Lardinois S."/>
            <person name="Lauber J."/>
            <person name="Lazarevic V."/>
            <person name="Lee S.-M."/>
            <person name="Levine A."/>
            <person name="Liu H."/>
            <person name="Masuda S."/>
            <person name="Mauel C."/>
            <person name="Medigue C."/>
            <person name="Medina N."/>
            <person name="Mellado R.P."/>
            <person name="Mizuno M."/>
            <person name="Moestl D."/>
            <person name="Nakai S."/>
            <person name="Noback M."/>
            <person name="Noone D."/>
            <person name="O'Reilly M."/>
            <person name="Ogawa K."/>
            <person name="Ogiwara A."/>
            <person name="Oudega B."/>
            <person name="Park S.-H."/>
            <person name="Parro V."/>
            <person name="Pohl T.M."/>
            <person name="Portetelle D."/>
            <person name="Porwollik S."/>
            <person name="Prescott A.M."/>
            <person name="Presecan E."/>
            <person name="Pujic P."/>
            <person name="Purnelle B."/>
            <person name="Rapoport G."/>
            <person name="Rey M."/>
            <person name="Reynolds S."/>
            <person name="Rieger M."/>
            <person name="Rivolta C."/>
            <person name="Rocha E."/>
            <person name="Roche B."/>
            <person name="Rose M."/>
            <person name="Sadaie Y."/>
            <person name="Sato T."/>
            <person name="Scanlan E."/>
            <person name="Schleich S."/>
            <person name="Schroeter R."/>
            <person name="Scoffone F."/>
            <person name="Sekiguchi J."/>
            <person name="Sekowska A."/>
            <person name="Seror S.J."/>
            <person name="Serror P."/>
            <person name="Shin B.-S."/>
            <person name="Soldo B."/>
            <person name="Sorokin A."/>
            <person name="Tacconi E."/>
            <person name="Takagi T."/>
            <person name="Takahashi H."/>
            <person name="Takemaru K."/>
            <person name="Takeuchi M."/>
            <person name="Tamakoshi A."/>
            <person name="Tanaka T."/>
            <person name="Terpstra P."/>
            <person name="Tognoni A."/>
            <person name="Tosato V."/>
            <person name="Uchiyama S."/>
            <person name="Vandenbol M."/>
            <person name="Vannier F."/>
            <person name="Vassarotti A."/>
            <person name="Viari A."/>
            <person name="Wambutt R."/>
            <person name="Wedler E."/>
            <person name="Wedler H."/>
            <person name="Weitzenegger T."/>
            <person name="Winters P."/>
            <person name="Wipat A."/>
            <person name="Yamamoto H."/>
            <person name="Yamane K."/>
            <person name="Yasumoto K."/>
            <person name="Yata K."/>
            <person name="Yoshida K."/>
            <person name="Yoshikawa H.-F."/>
            <person name="Zumstein E."/>
            <person name="Yoshikawa H."/>
            <person name="Danchin A."/>
        </authorList>
    </citation>
    <scope>NUCLEOTIDE SEQUENCE [LARGE SCALE GENOMIC DNA]</scope>
    <source>
        <strain>168</strain>
    </source>
</reference>
<reference key="4">
    <citation type="journal article" date="2006" name="Biochemistry">
        <title>Characterization of a thermostable NADPH:FMN oxidoreductase from the mesophilic bacterium Bacillus subtilis.</title>
        <authorList>
            <person name="Deller S."/>
            <person name="Sollner S."/>
            <person name="Trenker-El-Toukhy R."/>
            <person name="Jelesarov I."/>
            <person name="Guebitz G.M."/>
            <person name="Macheroux P."/>
        </authorList>
    </citation>
    <scope>FUNCTION</scope>
    <scope>COFACTOR</scope>
    <scope>BIOPHYSICOCHEMICAL PROPERTIES</scope>
    <scope>SUBUNIT</scope>
    <source>
        <strain>168</strain>
    </source>
</reference>
<reference key="5">
    <citation type="journal article" date="2006" name="J. Bacteriol.">
        <title>Regulation of LiaRS-dependent gene expression in Bacillus subtilis: identification of inhibitor proteins, regulator binding sites, and target genes of a conserved cell envelope stress-sensing two-component system.</title>
        <authorList>
            <person name="Jordan S."/>
            <person name="Junker A."/>
            <person name="Helmann J.D."/>
            <person name="Mascher T."/>
        </authorList>
    </citation>
    <scope>INDUCTION BY CELL ENVELOPE STRESS</scope>
</reference>
<reference key="6">
    <citation type="submission" date="2005-01" db="PDB data bank">
        <title>Azobenzene reductase from Bacillus subtilis.</title>
        <authorList>
            <consortium name="Midwest center for structural genomics (MCSG)"/>
        </authorList>
    </citation>
    <scope>X-RAY CRYSTALLOGRAPHY (2.5 ANGSTROMS) IN COMPLEX WITH FMN</scope>
</reference>
<reference key="7">
    <citation type="submission" date="2008-03" db="PDB data bank">
        <title>Crystal structure of the putative NADPH-dependent azobenzene FMN-reductase yhdA from Bacillus subtilis, Northeast structural genomics target SR135.</title>
        <authorList>
            <consortium name="Northeast structural genomics consortium (NESG)"/>
        </authorList>
    </citation>
    <scope>X-RAY CRYSTALLOGRAPHY (2.92 ANGSTROMS) IN COMPLEX WITH FMN</scope>
    <scope>SUBUNIT</scope>
    <source>
        <strain>168</strain>
    </source>
</reference>
<comment type="function">
    <text evidence="1 3">Catalyzes the reductive cleavage of azo bond in aromatic azo compounds to the corresponding amines. Requires NADPH, but not NADH, as an electron donor for its activity.</text>
</comment>
<comment type="cofactor">
    <cofactor evidence="1 3">
        <name>FMN</name>
        <dbReference type="ChEBI" id="CHEBI:58210"/>
    </cofactor>
</comment>
<comment type="biophysicochemical properties">
    <kinetics>
        <KM evidence="1">0.58 mM for NADPH</KM>
        <KM evidence="1">20 uM for FMN</KM>
    </kinetics>
</comment>
<comment type="subunit">
    <text evidence="1 4 5">Homotetramer.</text>
</comment>
<comment type="interaction">
    <interactant intactId="EBI-7168398">
        <id>O07529</id>
    </interactant>
    <interactant intactId="EBI-7168398">
        <id>O07529</id>
        <label>azr</label>
    </interactant>
    <organismsDiffer>false</organismsDiffer>
    <experiments>6</experiments>
</comment>
<comment type="induction">
    <text evidence="2">Part of the yhcYZ-yhdA operon that is induced by the two-component regulatory system LiaS/LiaR in response to cell envelope stress.</text>
</comment>
<comment type="similarity">
    <text evidence="6">Belongs to the azoreductase type 2 family.</text>
</comment>
<sequence>MNMLVINGTPRKHGRTRIAASYIAALYHTDLIDLSEFVLPVFNGEAEQSELLKVQELKQRVTKADAIVLLSPEYHSGMSGALKNALDFLSSEQFKYKPVALLAVAGGGKGGINALNNMRTVMRGVYANVIPKQLVLDPVHIDVENATVAENIKESIKELVEELSMFAKAGNPGV</sequence>
<keyword id="KW-0002">3D-structure</keyword>
<keyword id="KW-0285">Flavoprotein</keyword>
<keyword id="KW-0288">FMN</keyword>
<keyword id="KW-0521">NADP</keyword>
<keyword id="KW-0560">Oxidoreductase</keyword>
<keyword id="KW-1185">Reference proteome</keyword>
<dbReference type="EC" id="1.7.-.-"/>
<dbReference type="EMBL" id="AB071368">
    <property type="protein sequence ID" value="BAB85976.1"/>
    <property type="molecule type" value="mRNA"/>
</dbReference>
<dbReference type="EMBL" id="Y14079">
    <property type="protein sequence ID" value="CAA74434.1"/>
    <property type="molecule type" value="Genomic_DNA"/>
</dbReference>
<dbReference type="EMBL" id="AL009126">
    <property type="protein sequence ID" value="CAB12762.1"/>
    <property type="molecule type" value="Genomic_DNA"/>
</dbReference>
<dbReference type="PIR" id="G69824">
    <property type="entry name" value="G69824"/>
</dbReference>
<dbReference type="RefSeq" id="NP_388815.1">
    <property type="nucleotide sequence ID" value="NC_000964.3"/>
</dbReference>
<dbReference type="RefSeq" id="WP_003244703.1">
    <property type="nucleotide sequence ID" value="NZ_OZ025638.1"/>
</dbReference>
<dbReference type="PDB" id="1NNI">
    <property type="method" value="X-ray"/>
    <property type="resolution" value="2.50 A"/>
    <property type="chains" value="1=1-174"/>
</dbReference>
<dbReference type="PDB" id="2GSW">
    <property type="method" value="X-ray"/>
    <property type="resolution" value="2.92 A"/>
    <property type="chains" value="A/B/C/D=1-174"/>
</dbReference>
<dbReference type="PDB" id="3GFQ">
    <property type="method" value="X-ray"/>
    <property type="resolution" value="3.00 A"/>
    <property type="chains" value="A/B/C/D=1-174"/>
</dbReference>
<dbReference type="PDB" id="3GFR">
    <property type="method" value="X-ray"/>
    <property type="resolution" value="2.40 A"/>
    <property type="chains" value="A/B/C/D=1-174"/>
</dbReference>
<dbReference type="PDB" id="3GFS">
    <property type="method" value="X-ray"/>
    <property type="resolution" value="2.10 A"/>
    <property type="chains" value="A/B/C/D/E/F/G/H/I/J/K/L=1-174"/>
</dbReference>
<dbReference type="PDBsum" id="1NNI"/>
<dbReference type="PDBsum" id="2GSW"/>
<dbReference type="PDBsum" id="3GFQ"/>
<dbReference type="PDBsum" id="3GFR"/>
<dbReference type="PDBsum" id="3GFS"/>
<dbReference type="SMR" id="O07529"/>
<dbReference type="FunCoup" id="O07529">
    <property type="interactions" value="220"/>
</dbReference>
<dbReference type="MINT" id="O07529"/>
<dbReference type="STRING" id="224308.BSU09340"/>
<dbReference type="DrugBank" id="DB03247">
    <property type="generic name" value="Flavin mononucleotide"/>
</dbReference>
<dbReference type="PaxDb" id="224308-BSU09340"/>
<dbReference type="DNASU" id="936266"/>
<dbReference type="EnsemblBacteria" id="CAB12762">
    <property type="protein sequence ID" value="CAB12762"/>
    <property type="gene ID" value="BSU_09340"/>
</dbReference>
<dbReference type="GeneID" id="936266"/>
<dbReference type="KEGG" id="bsu:BSU09340"/>
<dbReference type="PATRIC" id="fig|224308.179.peg.1007"/>
<dbReference type="eggNOG" id="COG0431">
    <property type="taxonomic scope" value="Bacteria"/>
</dbReference>
<dbReference type="InParanoid" id="O07529"/>
<dbReference type="OrthoDB" id="9790975at2"/>
<dbReference type="PhylomeDB" id="O07529"/>
<dbReference type="BioCyc" id="BSUB:BSU09340-MONOMER"/>
<dbReference type="BRENDA" id="1.7.1.6">
    <property type="organism ID" value="658"/>
</dbReference>
<dbReference type="SABIO-RK" id="O07529"/>
<dbReference type="EvolutionaryTrace" id="O07529"/>
<dbReference type="Proteomes" id="UP000001570">
    <property type="component" value="Chromosome"/>
</dbReference>
<dbReference type="GO" id="GO:0005829">
    <property type="term" value="C:cytosol"/>
    <property type="evidence" value="ECO:0000318"/>
    <property type="project" value="GO_Central"/>
</dbReference>
<dbReference type="GO" id="GO:0010181">
    <property type="term" value="F:FMN binding"/>
    <property type="evidence" value="ECO:0000318"/>
    <property type="project" value="GO_Central"/>
</dbReference>
<dbReference type="GO" id="GO:0042802">
    <property type="term" value="F:identical protein binding"/>
    <property type="evidence" value="ECO:0000353"/>
    <property type="project" value="IntAct"/>
</dbReference>
<dbReference type="GO" id="GO:0016491">
    <property type="term" value="F:oxidoreductase activity"/>
    <property type="evidence" value="ECO:0007669"/>
    <property type="project" value="UniProtKB-KW"/>
</dbReference>
<dbReference type="FunFam" id="3.40.50.360:FF:000022">
    <property type="entry name" value="NADPH azoreductase"/>
    <property type="match status" value="1"/>
</dbReference>
<dbReference type="Gene3D" id="3.40.50.360">
    <property type="match status" value="1"/>
</dbReference>
<dbReference type="InterPro" id="IPR029039">
    <property type="entry name" value="Flavoprotein-like_sf"/>
</dbReference>
<dbReference type="InterPro" id="IPR005025">
    <property type="entry name" value="FMN_Rdtase-like_dom"/>
</dbReference>
<dbReference type="InterPro" id="IPR050712">
    <property type="entry name" value="NAD(P)H-dep_reductase"/>
</dbReference>
<dbReference type="PANTHER" id="PTHR30543">
    <property type="entry name" value="CHROMATE REDUCTASE"/>
    <property type="match status" value="1"/>
</dbReference>
<dbReference type="PANTHER" id="PTHR30543:SF21">
    <property type="entry name" value="NAD(P)H-DEPENDENT FMN REDUCTASE LOT6"/>
    <property type="match status" value="1"/>
</dbReference>
<dbReference type="Pfam" id="PF03358">
    <property type="entry name" value="FMN_red"/>
    <property type="match status" value="1"/>
</dbReference>
<dbReference type="SUPFAM" id="SSF52218">
    <property type="entry name" value="Flavoproteins"/>
    <property type="match status" value="1"/>
</dbReference>
<proteinExistence type="evidence at protein level"/>